<name>FB9_ARATH</name>
<feature type="chain" id="PRO_0000283288" description="F-box protein At1g15015">
    <location>
        <begin position="1"/>
        <end position="160"/>
    </location>
</feature>
<feature type="domain" description="F-box" evidence="1">
    <location>
        <begin position="1"/>
        <end position="44"/>
    </location>
</feature>
<gene>
    <name type="ordered locus">At1g15015</name>
    <name type="ORF">T15D22.6</name>
</gene>
<dbReference type="EMBL" id="AC012189">
    <property type="protein sequence ID" value="AAF31024.1"/>
    <property type="molecule type" value="Genomic_DNA"/>
</dbReference>
<dbReference type="EMBL" id="CP002684">
    <property type="protein sequence ID" value="AEE29254.1"/>
    <property type="molecule type" value="Genomic_DNA"/>
</dbReference>
<dbReference type="EMBL" id="DQ487632">
    <property type="protein sequence ID" value="ABF59410.1"/>
    <property type="molecule type" value="Genomic_DNA"/>
</dbReference>
<dbReference type="EMBL" id="EF183418">
    <property type="status" value="NOT_ANNOTATED_CDS"/>
    <property type="molecule type" value="mRNA"/>
</dbReference>
<dbReference type="PIR" id="F86283">
    <property type="entry name" value="F86283"/>
</dbReference>
<dbReference type="RefSeq" id="NP_001117291.1">
    <property type="nucleotide sequence ID" value="NM_001123819.1"/>
</dbReference>
<dbReference type="FunCoup" id="Q9M9Q4">
    <property type="interactions" value="5"/>
</dbReference>
<dbReference type="PaxDb" id="3702-AT1G15015.1"/>
<dbReference type="EnsemblPlants" id="AT1G15015.1">
    <property type="protein sequence ID" value="AT1G15015.1"/>
    <property type="gene ID" value="AT1G15015"/>
</dbReference>
<dbReference type="GeneID" id="6240794"/>
<dbReference type="Gramene" id="AT1G15015.1">
    <property type="protein sequence ID" value="AT1G15015.1"/>
    <property type="gene ID" value="AT1G15015"/>
</dbReference>
<dbReference type="KEGG" id="ath:AT1G15015"/>
<dbReference type="Araport" id="AT1G15015"/>
<dbReference type="TAIR" id="AT1G15015"/>
<dbReference type="HOGENOM" id="CLU_1654542_0_0_1"/>
<dbReference type="InParanoid" id="Q9M9Q4"/>
<dbReference type="PhylomeDB" id="Q9M9Q4"/>
<dbReference type="PRO" id="PR:Q9M9Q4"/>
<dbReference type="Proteomes" id="UP000006548">
    <property type="component" value="Chromosome 1"/>
</dbReference>
<dbReference type="ExpressionAtlas" id="Q9M9Q4">
    <property type="expression patterns" value="differential"/>
</dbReference>
<dbReference type="CDD" id="cd22157">
    <property type="entry name" value="F-box_AtFBW1-like"/>
    <property type="match status" value="1"/>
</dbReference>
<dbReference type="Gene3D" id="1.20.1280.50">
    <property type="match status" value="1"/>
</dbReference>
<dbReference type="InterPro" id="IPR036047">
    <property type="entry name" value="F-box-like_dom_sf"/>
</dbReference>
<dbReference type="InterPro" id="IPR001810">
    <property type="entry name" value="F-box_dom"/>
</dbReference>
<dbReference type="InterPro" id="IPR050796">
    <property type="entry name" value="SCF_F-box_component"/>
</dbReference>
<dbReference type="PANTHER" id="PTHR31672">
    <property type="entry name" value="BNACNNG10540D PROTEIN"/>
    <property type="match status" value="1"/>
</dbReference>
<dbReference type="PANTHER" id="PTHR31672:SF13">
    <property type="entry name" value="F-BOX PROTEIN CPR30-LIKE"/>
    <property type="match status" value="1"/>
</dbReference>
<dbReference type="Pfam" id="PF00646">
    <property type="entry name" value="F-box"/>
    <property type="match status" value="1"/>
</dbReference>
<dbReference type="SMART" id="SM00256">
    <property type="entry name" value="FBOX"/>
    <property type="match status" value="1"/>
</dbReference>
<dbReference type="SUPFAM" id="SSF81383">
    <property type="entry name" value="F-box domain"/>
    <property type="match status" value="1"/>
</dbReference>
<dbReference type="PROSITE" id="PS50181">
    <property type="entry name" value="FBOX"/>
    <property type="match status" value="1"/>
</dbReference>
<sequence length="160" mass="18382">MDVTLPHHVVEDILERLPVKTLRKFKCVCSTWRSTIDSQRFKDRHMIHGQLLEDPDILLLGRWDPPSLSKNASLMTLTFDSSTMPFSFKIQTIPGKANFYKVTQSHSKSLKVVTVYDSNMEATGLVLYDMTQSERTFANFCLSFKNRETPTAYFPSLITI</sequence>
<keyword id="KW-1185">Reference proteome</keyword>
<reference key="1">
    <citation type="journal article" date="2000" name="Nature">
        <title>Sequence and analysis of chromosome 1 of the plant Arabidopsis thaliana.</title>
        <authorList>
            <person name="Theologis A."/>
            <person name="Ecker J.R."/>
            <person name="Palm C.J."/>
            <person name="Federspiel N.A."/>
            <person name="Kaul S."/>
            <person name="White O."/>
            <person name="Alonso J."/>
            <person name="Altafi H."/>
            <person name="Araujo R."/>
            <person name="Bowman C.L."/>
            <person name="Brooks S.Y."/>
            <person name="Buehler E."/>
            <person name="Chan A."/>
            <person name="Chao Q."/>
            <person name="Chen H."/>
            <person name="Cheuk R.F."/>
            <person name="Chin C.W."/>
            <person name="Chung M.K."/>
            <person name="Conn L."/>
            <person name="Conway A.B."/>
            <person name="Conway A.R."/>
            <person name="Creasy T.H."/>
            <person name="Dewar K."/>
            <person name="Dunn P."/>
            <person name="Etgu P."/>
            <person name="Feldblyum T.V."/>
            <person name="Feng J.-D."/>
            <person name="Fong B."/>
            <person name="Fujii C.Y."/>
            <person name="Gill J.E."/>
            <person name="Goldsmith A.D."/>
            <person name="Haas B."/>
            <person name="Hansen N.F."/>
            <person name="Hughes B."/>
            <person name="Huizar L."/>
            <person name="Hunter J.L."/>
            <person name="Jenkins J."/>
            <person name="Johnson-Hopson C."/>
            <person name="Khan S."/>
            <person name="Khaykin E."/>
            <person name="Kim C.J."/>
            <person name="Koo H.L."/>
            <person name="Kremenetskaia I."/>
            <person name="Kurtz D.B."/>
            <person name="Kwan A."/>
            <person name="Lam B."/>
            <person name="Langin-Hooper S."/>
            <person name="Lee A."/>
            <person name="Lee J.M."/>
            <person name="Lenz C.A."/>
            <person name="Li J.H."/>
            <person name="Li Y.-P."/>
            <person name="Lin X."/>
            <person name="Liu S.X."/>
            <person name="Liu Z.A."/>
            <person name="Luros J.S."/>
            <person name="Maiti R."/>
            <person name="Marziali A."/>
            <person name="Militscher J."/>
            <person name="Miranda M."/>
            <person name="Nguyen M."/>
            <person name="Nierman W.C."/>
            <person name="Osborne B.I."/>
            <person name="Pai G."/>
            <person name="Peterson J."/>
            <person name="Pham P.K."/>
            <person name="Rizzo M."/>
            <person name="Rooney T."/>
            <person name="Rowley D."/>
            <person name="Sakano H."/>
            <person name="Salzberg S.L."/>
            <person name="Schwartz J.R."/>
            <person name="Shinn P."/>
            <person name="Southwick A.M."/>
            <person name="Sun H."/>
            <person name="Tallon L.J."/>
            <person name="Tambunga G."/>
            <person name="Toriumi M.J."/>
            <person name="Town C.D."/>
            <person name="Utterback T."/>
            <person name="Van Aken S."/>
            <person name="Vaysberg M."/>
            <person name="Vysotskaia V.S."/>
            <person name="Walker M."/>
            <person name="Wu D."/>
            <person name="Yu G."/>
            <person name="Fraser C.M."/>
            <person name="Venter J.C."/>
            <person name="Davis R.W."/>
        </authorList>
    </citation>
    <scope>NUCLEOTIDE SEQUENCE [LARGE SCALE GENOMIC DNA]</scope>
    <source>
        <strain>cv. Columbia</strain>
    </source>
</reference>
<reference key="2">
    <citation type="journal article" date="2017" name="Plant J.">
        <title>Araport11: a complete reannotation of the Arabidopsis thaliana reference genome.</title>
        <authorList>
            <person name="Cheng C.Y."/>
            <person name="Krishnakumar V."/>
            <person name="Chan A.P."/>
            <person name="Thibaud-Nissen F."/>
            <person name="Schobel S."/>
            <person name="Town C.D."/>
        </authorList>
    </citation>
    <scope>GENOME REANNOTATION</scope>
    <source>
        <strain>cv. Columbia</strain>
    </source>
</reference>
<reference key="3">
    <citation type="journal article" date="2006" name="Plant Biotechnol. J.">
        <title>Simultaneous high-throughput recombinational cloning of open reading frames in closed and open configurations.</title>
        <authorList>
            <person name="Underwood B.A."/>
            <person name="Vanderhaeghen R."/>
            <person name="Whitford R."/>
            <person name="Town C.D."/>
            <person name="Hilson P."/>
        </authorList>
    </citation>
    <scope>NUCLEOTIDE SEQUENCE [LARGE SCALE GENOMIC DNA]</scope>
    <source>
        <strain>cv. Columbia</strain>
    </source>
</reference>
<reference key="4">
    <citation type="journal article" date="2007" name="BMC Genomics">
        <title>Experimental validation of novel genes predicted in the un-annotated regions of the Arabidopsis genome.</title>
        <authorList>
            <person name="Moskal W.A. Jr."/>
            <person name="Wu H.C."/>
            <person name="Underwood B.A."/>
            <person name="Wang W."/>
            <person name="Town C.D."/>
            <person name="Xiao Y.-L."/>
        </authorList>
    </citation>
    <scope>NUCLEOTIDE SEQUENCE [LARGE SCALE MRNA]</scope>
    <source>
        <strain>cv. Columbia</strain>
    </source>
</reference>
<accession>Q9M9Q4</accession>
<protein>
    <recommendedName>
        <fullName>F-box protein At1g15015</fullName>
    </recommendedName>
</protein>
<evidence type="ECO:0000255" key="1">
    <source>
        <dbReference type="PROSITE-ProRule" id="PRU00080"/>
    </source>
</evidence>
<organism>
    <name type="scientific">Arabidopsis thaliana</name>
    <name type="common">Mouse-ear cress</name>
    <dbReference type="NCBI Taxonomy" id="3702"/>
    <lineage>
        <taxon>Eukaryota</taxon>
        <taxon>Viridiplantae</taxon>
        <taxon>Streptophyta</taxon>
        <taxon>Embryophyta</taxon>
        <taxon>Tracheophyta</taxon>
        <taxon>Spermatophyta</taxon>
        <taxon>Magnoliopsida</taxon>
        <taxon>eudicotyledons</taxon>
        <taxon>Gunneridae</taxon>
        <taxon>Pentapetalae</taxon>
        <taxon>rosids</taxon>
        <taxon>malvids</taxon>
        <taxon>Brassicales</taxon>
        <taxon>Brassicaceae</taxon>
        <taxon>Camelineae</taxon>
        <taxon>Arabidopsis</taxon>
    </lineage>
</organism>
<proteinExistence type="evidence at transcript level"/>